<feature type="chain" id="PRO_1000195226" description="Holliday junction branch migration complex subunit RuvB">
    <location>
        <begin position="1"/>
        <end position="336"/>
    </location>
</feature>
<feature type="region of interest" description="Large ATPase domain (RuvB-L)" evidence="1">
    <location>
        <begin position="4"/>
        <end position="184"/>
    </location>
</feature>
<feature type="region of interest" description="Small ATPAse domain (RuvB-S)" evidence="1">
    <location>
        <begin position="185"/>
        <end position="255"/>
    </location>
</feature>
<feature type="region of interest" description="Head domain (RuvB-H)" evidence="1">
    <location>
        <begin position="258"/>
        <end position="336"/>
    </location>
</feature>
<feature type="binding site" evidence="1">
    <location>
        <position position="24"/>
    </location>
    <ligand>
        <name>ATP</name>
        <dbReference type="ChEBI" id="CHEBI:30616"/>
    </ligand>
</feature>
<feature type="binding site" evidence="1">
    <location>
        <position position="65"/>
    </location>
    <ligand>
        <name>ATP</name>
        <dbReference type="ChEBI" id="CHEBI:30616"/>
    </ligand>
</feature>
<feature type="binding site" evidence="1">
    <location>
        <position position="68"/>
    </location>
    <ligand>
        <name>ATP</name>
        <dbReference type="ChEBI" id="CHEBI:30616"/>
    </ligand>
</feature>
<feature type="binding site" evidence="1">
    <location>
        <position position="69"/>
    </location>
    <ligand>
        <name>ATP</name>
        <dbReference type="ChEBI" id="CHEBI:30616"/>
    </ligand>
</feature>
<feature type="binding site" evidence="1">
    <location>
        <position position="69"/>
    </location>
    <ligand>
        <name>Mg(2+)</name>
        <dbReference type="ChEBI" id="CHEBI:18420"/>
    </ligand>
</feature>
<feature type="binding site" evidence="1">
    <location>
        <position position="70"/>
    </location>
    <ligand>
        <name>ATP</name>
        <dbReference type="ChEBI" id="CHEBI:30616"/>
    </ligand>
</feature>
<feature type="binding site" evidence="1">
    <location>
        <begin position="131"/>
        <end position="133"/>
    </location>
    <ligand>
        <name>ATP</name>
        <dbReference type="ChEBI" id="CHEBI:30616"/>
    </ligand>
</feature>
<feature type="binding site" evidence="1">
    <location>
        <position position="174"/>
    </location>
    <ligand>
        <name>ATP</name>
        <dbReference type="ChEBI" id="CHEBI:30616"/>
    </ligand>
</feature>
<feature type="binding site" evidence="1">
    <location>
        <position position="184"/>
    </location>
    <ligand>
        <name>ATP</name>
        <dbReference type="ChEBI" id="CHEBI:30616"/>
    </ligand>
</feature>
<feature type="binding site" evidence="1">
    <location>
        <position position="221"/>
    </location>
    <ligand>
        <name>ATP</name>
        <dbReference type="ChEBI" id="CHEBI:30616"/>
    </ligand>
</feature>
<feature type="binding site" evidence="1">
    <location>
        <position position="294"/>
    </location>
    <ligand>
        <name>DNA</name>
        <dbReference type="ChEBI" id="CHEBI:16991"/>
    </ligand>
</feature>
<feature type="binding site" evidence="1">
    <location>
        <position position="313"/>
    </location>
    <ligand>
        <name>DNA</name>
        <dbReference type="ChEBI" id="CHEBI:16991"/>
    </ligand>
</feature>
<feature type="binding site" evidence="1">
    <location>
        <position position="318"/>
    </location>
    <ligand>
        <name>DNA</name>
        <dbReference type="ChEBI" id="CHEBI:16991"/>
    </ligand>
</feature>
<sequence>MIEADRLIQPQVIEPDEVVDRAMRPKLLDEYTGQDDTRAQLKIFIEAAQKRGEALDHMLIYGPPGLGKTTLAMIVANEMGVNIKSTSGPVLEKAGDLAALLTNLEENDVLFIDEIHRLSPVVEEILYPAMEDYQLDIMIGEGPAARSIKLDLPPFTLVGATTQAGSLTSPLRARFGIPLRLEFYNIKDLSTIVIRSAKVMELEIDEEGAIEIARRSRGTPRIANRLLRRVRDFAEVKHSGAVTKVVAELALDMLDVDAEGFDYMDRKLLLAIIDKFMGGPVGLDNLAAAIGEERETIEDVLEPFLIQQGFVQRTPRGRIATQRAYNHFNLIQPEAK</sequence>
<evidence type="ECO:0000255" key="1">
    <source>
        <dbReference type="HAMAP-Rule" id="MF_00016"/>
    </source>
</evidence>
<name>RUVB_SHEPW</name>
<organism>
    <name type="scientific">Shewanella piezotolerans (strain WP3 / JCM 13877)</name>
    <dbReference type="NCBI Taxonomy" id="225849"/>
    <lineage>
        <taxon>Bacteria</taxon>
        <taxon>Pseudomonadati</taxon>
        <taxon>Pseudomonadota</taxon>
        <taxon>Gammaproteobacteria</taxon>
        <taxon>Alteromonadales</taxon>
        <taxon>Shewanellaceae</taxon>
        <taxon>Shewanella</taxon>
    </lineage>
</organism>
<accession>B8CNY1</accession>
<protein>
    <recommendedName>
        <fullName evidence="1">Holliday junction branch migration complex subunit RuvB</fullName>
        <ecNumber evidence="1">3.6.4.-</ecNumber>
    </recommendedName>
</protein>
<keyword id="KW-0067">ATP-binding</keyword>
<keyword id="KW-0963">Cytoplasm</keyword>
<keyword id="KW-0227">DNA damage</keyword>
<keyword id="KW-0233">DNA recombination</keyword>
<keyword id="KW-0234">DNA repair</keyword>
<keyword id="KW-0238">DNA-binding</keyword>
<keyword id="KW-0378">Hydrolase</keyword>
<keyword id="KW-0547">Nucleotide-binding</keyword>
<comment type="function">
    <text evidence="1">The RuvA-RuvB-RuvC complex processes Holliday junction (HJ) DNA during genetic recombination and DNA repair, while the RuvA-RuvB complex plays an important role in the rescue of blocked DNA replication forks via replication fork reversal (RFR). RuvA specifically binds to HJ cruciform DNA, conferring on it an open structure. The RuvB hexamer acts as an ATP-dependent pump, pulling dsDNA into and through the RuvAB complex. RuvB forms 2 homohexamers on either side of HJ DNA bound by 1 or 2 RuvA tetramers; 4 subunits per hexamer contact DNA at a time. Coordinated motions by a converter formed by DNA-disengaged RuvB subunits stimulates ATP hydrolysis and nucleotide exchange. Immobilization of the converter enables RuvB to convert the ATP-contained energy into a lever motion, pulling 2 nucleotides of DNA out of the RuvA tetramer per ATP hydrolyzed, thus driving DNA branch migration. The RuvB motors rotate together with the DNA substrate, which together with the progressing nucleotide cycle form the mechanistic basis for DNA recombination by continuous HJ branch migration. Branch migration allows RuvC to scan DNA until it finds its consensus sequence, where it cleaves and resolves cruciform DNA.</text>
</comment>
<comment type="catalytic activity">
    <reaction evidence="1">
        <text>ATP + H2O = ADP + phosphate + H(+)</text>
        <dbReference type="Rhea" id="RHEA:13065"/>
        <dbReference type="ChEBI" id="CHEBI:15377"/>
        <dbReference type="ChEBI" id="CHEBI:15378"/>
        <dbReference type="ChEBI" id="CHEBI:30616"/>
        <dbReference type="ChEBI" id="CHEBI:43474"/>
        <dbReference type="ChEBI" id="CHEBI:456216"/>
    </reaction>
</comment>
<comment type="subunit">
    <text evidence="1">Homohexamer. Forms an RuvA(8)-RuvB(12)-Holliday junction (HJ) complex. HJ DNA is sandwiched between 2 RuvA tetramers; dsDNA enters through RuvA and exits via RuvB. An RuvB hexamer assembles on each DNA strand where it exits the tetramer. Each RuvB hexamer is contacted by two RuvA subunits (via domain III) on 2 adjacent RuvB subunits; this complex drives branch migration. In the full resolvosome a probable DNA-RuvA(4)-RuvB(12)-RuvC(2) complex forms which resolves the HJ.</text>
</comment>
<comment type="subcellular location">
    <subcellularLocation>
        <location evidence="1">Cytoplasm</location>
    </subcellularLocation>
</comment>
<comment type="domain">
    <text evidence="1">Has 3 domains, the large (RuvB-L) and small ATPase (RuvB-S) domains and the C-terminal head (RuvB-H) domain. The head domain binds DNA, while the ATPase domains jointly bind ATP, ADP or are empty depending on the state of the subunit in the translocation cycle. During a single DNA translocation step the structure of each domain remains the same, but their relative positions change.</text>
</comment>
<comment type="similarity">
    <text evidence="1">Belongs to the RuvB family.</text>
</comment>
<gene>
    <name evidence="1" type="primary">ruvB</name>
    <name type="ordered locus">swp_2355</name>
</gene>
<proteinExistence type="inferred from homology"/>
<reference key="1">
    <citation type="journal article" date="2008" name="PLoS ONE">
        <title>Environmental adaptation: genomic analysis of the piezotolerant and psychrotolerant deep-sea iron reducing bacterium Shewanella piezotolerans WP3.</title>
        <authorList>
            <person name="Wang F."/>
            <person name="Wang J."/>
            <person name="Jian H."/>
            <person name="Zhang B."/>
            <person name="Li S."/>
            <person name="Wang F."/>
            <person name="Zeng X."/>
            <person name="Gao L."/>
            <person name="Bartlett D.H."/>
            <person name="Yu J."/>
            <person name="Hu S."/>
            <person name="Xiao X."/>
        </authorList>
    </citation>
    <scope>NUCLEOTIDE SEQUENCE [LARGE SCALE GENOMIC DNA]</scope>
    <source>
        <strain>WP3 / JCM 13877</strain>
    </source>
</reference>
<dbReference type="EC" id="3.6.4.-" evidence="1"/>
<dbReference type="EMBL" id="CP000472">
    <property type="protein sequence ID" value="ACJ29100.1"/>
    <property type="molecule type" value="Genomic_DNA"/>
</dbReference>
<dbReference type="RefSeq" id="WP_020912460.1">
    <property type="nucleotide sequence ID" value="NC_011566.1"/>
</dbReference>
<dbReference type="SMR" id="B8CNY1"/>
<dbReference type="STRING" id="225849.swp_2355"/>
<dbReference type="KEGG" id="swp:swp_2355"/>
<dbReference type="eggNOG" id="COG2255">
    <property type="taxonomic scope" value="Bacteria"/>
</dbReference>
<dbReference type="HOGENOM" id="CLU_055599_1_0_6"/>
<dbReference type="OrthoDB" id="9804478at2"/>
<dbReference type="Proteomes" id="UP000000753">
    <property type="component" value="Chromosome"/>
</dbReference>
<dbReference type="GO" id="GO:0005737">
    <property type="term" value="C:cytoplasm"/>
    <property type="evidence" value="ECO:0007669"/>
    <property type="project" value="UniProtKB-SubCell"/>
</dbReference>
<dbReference type="GO" id="GO:0048476">
    <property type="term" value="C:Holliday junction resolvase complex"/>
    <property type="evidence" value="ECO:0007669"/>
    <property type="project" value="UniProtKB-UniRule"/>
</dbReference>
<dbReference type="GO" id="GO:0005524">
    <property type="term" value="F:ATP binding"/>
    <property type="evidence" value="ECO:0007669"/>
    <property type="project" value="UniProtKB-UniRule"/>
</dbReference>
<dbReference type="GO" id="GO:0016887">
    <property type="term" value="F:ATP hydrolysis activity"/>
    <property type="evidence" value="ECO:0007669"/>
    <property type="project" value="InterPro"/>
</dbReference>
<dbReference type="GO" id="GO:0000400">
    <property type="term" value="F:four-way junction DNA binding"/>
    <property type="evidence" value="ECO:0007669"/>
    <property type="project" value="UniProtKB-UniRule"/>
</dbReference>
<dbReference type="GO" id="GO:0009378">
    <property type="term" value="F:four-way junction helicase activity"/>
    <property type="evidence" value="ECO:0007669"/>
    <property type="project" value="InterPro"/>
</dbReference>
<dbReference type="GO" id="GO:0006310">
    <property type="term" value="P:DNA recombination"/>
    <property type="evidence" value="ECO:0007669"/>
    <property type="project" value="UniProtKB-UniRule"/>
</dbReference>
<dbReference type="GO" id="GO:0006281">
    <property type="term" value="P:DNA repair"/>
    <property type="evidence" value="ECO:0007669"/>
    <property type="project" value="UniProtKB-UniRule"/>
</dbReference>
<dbReference type="CDD" id="cd00009">
    <property type="entry name" value="AAA"/>
    <property type="match status" value="1"/>
</dbReference>
<dbReference type="FunFam" id="1.10.10.10:FF:000086">
    <property type="entry name" value="Holliday junction ATP-dependent DNA helicase RuvB"/>
    <property type="match status" value="1"/>
</dbReference>
<dbReference type="FunFam" id="1.10.8.60:FF:000023">
    <property type="entry name" value="Holliday junction ATP-dependent DNA helicase RuvB"/>
    <property type="match status" value="1"/>
</dbReference>
<dbReference type="FunFam" id="3.40.50.300:FF:000073">
    <property type="entry name" value="Holliday junction ATP-dependent DNA helicase RuvB"/>
    <property type="match status" value="1"/>
</dbReference>
<dbReference type="Gene3D" id="1.10.8.60">
    <property type="match status" value="1"/>
</dbReference>
<dbReference type="Gene3D" id="3.40.50.300">
    <property type="entry name" value="P-loop containing nucleotide triphosphate hydrolases"/>
    <property type="match status" value="1"/>
</dbReference>
<dbReference type="Gene3D" id="1.10.10.10">
    <property type="entry name" value="Winged helix-like DNA-binding domain superfamily/Winged helix DNA-binding domain"/>
    <property type="match status" value="1"/>
</dbReference>
<dbReference type="HAMAP" id="MF_00016">
    <property type="entry name" value="DNA_HJ_migration_RuvB"/>
    <property type="match status" value="1"/>
</dbReference>
<dbReference type="InterPro" id="IPR003593">
    <property type="entry name" value="AAA+_ATPase"/>
</dbReference>
<dbReference type="InterPro" id="IPR041445">
    <property type="entry name" value="AAA_lid_4"/>
</dbReference>
<dbReference type="InterPro" id="IPR004605">
    <property type="entry name" value="DNA_helicase_Holl-junc_RuvB"/>
</dbReference>
<dbReference type="InterPro" id="IPR027417">
    <property type="entry name" value="P-loop_NTPase"/>
</dbReference>
<dbReference type="InterPro" id="IPR008824">
    <property type="entry name" value="RuvB-like_N"/>
</dbReference>
<dbReference type="InterPro" id="IPR008823">
    <property type="entry name" value="RuvB_C"/>
</dbReference>
<dbReference type="InterPro" id="IPR036388">
    <property type="entry name" value="WH-like_DNA-bd_sf"/>
</dbReference>
<dbReference type="InterPro" id="IPR036390">
    <property type="entry name" value="WH_DNA-bd_sf"/>
</dbReference>
<dbReference type="NCBIfam" id="NF000868">
    <property type="entry name" value="PRK00080.1"/>
    <property type="match status" value="1"/>
</dbReference>
<dbReference type="NCBIfam" id="TIGR00635">
    <property type="entry name" value="ruvB"/>
    <property type="match status" value="1"/>
</dbReference>
<dbReference type="PANTHER" id="PTHR42848">
    <property type="match status" value="1"/>
</dbReference>
<dbReference type="PANTHER" id="PTHR42848:SF1">
    <property type="entry name" value="HOLLIDAY JUNCTION BRANCH MIGRATION COMPLEX SUBUNIT RUVB"/>
    <property type="match status" value="1"/>
</dbReference>
<dbReference type="Pfam" id="PF17864">
    <property type="entry name" value="AAA_lid_4"/>
    <property type="match status" value="1"/>
</dbReference>
<dbReference type="Pfam" id="PF05491">
    <property type="entry name" value="RuvB_C"/>
    <property type="match status" value="1"/>
</dbReference>
<dbReference type="Pfam" id="PF05496">
    <property type="entry name" value="RuvB_N"/>
    <property type="match status" value="1"/>
</dbReference>
<dbReference type="SMART" id="SM00382">
    <property type="entry name" value="AAA"/>
    <property type="match status" value="1"/>
</dbReference>
<dbReference type="SUPFAM" id="SSF52540">
    <property type="entry name" value="P-loop containing nucleoside triphosphate hydrolases"/>
    <property type="match status" value="1"/>
</dbReference>
<dbReference type="SUPFAM" id="SSF46785">
    <property type="entry name" value="Winged helix' DNA-binding domain"/>
    <property type="match status" value="1"/>
</dbReference>